<sequence>MNTVLSVQGASAPVKKKSFFSKFTRLNMLRLARAVIPAAVLMMFFPQLAMAAQGQDLMASGNTTVKATFGKDSSVVKWVVLAEVLVGAVMYMMTKNVKFLAGFAIISVFIAVGMAVVGLK</sequence>
<evidence type="ECO:0000250" key="1"/>
<evidence type="ECO:0000255" key="2"/>
<evidence type="ECO:0000305" key="3"/>
<protein>
    <recommendedName>
        <fullName>Pilin</fullName>
    </recommendedName>
</protein>
<comment type="function">
    <text evidence="1">Propilin is the precursor of the pilus subunit, pilin, that forms conjugative pili, the filamentous surface appendages required for cell-to-cell contact during the earlier stages of bacterial conjugation, and that retract after contact is established. Mature pilin is assembled with the help of TraQ and TraX (By similarity).</text>
</comment>
<comment type="subunit">
    <text evidence="1">Monomer. Interacts with itself to form filaments; also interacts with TraQ (By similarity).</text>
</comment>
<comment type="subcellular location">
    <subcellularLocation>
        <location>Cell inner membrane</location>
        <topology>Multi-pass membrane protein</topology>
    </subcellularLocation>
    <subcellularLocation>
        <location evidence="1">Secreted</location>
    </subcellularLocation>
    <text evidence="1">Propilin is directed to the inner membrane, where it is cleaved and acetylated. Mature pilin forms filaments that are secreted to form the conjugative pilus (By similarity).</text>
</comment>
<comment type="similarity">
    <text evidence="3">Belongs to the TraA family.</text>
</comment>
<dbReference type="EMBL" id="K03091">
    <property type="protein sequence ID" value="AAA92756.1"/>
    <property type="molecule type" value="Genomic_DNA"/>
</dbReference>
<dbReference type="EMBL" id="X13681">
    <property type="protein sequence ID" value="CAA31973.1"/>
    <property type="molecule type" value="Genomic_DNA"/>
</dbReference>
<dbReference type="EMBL" id="AH003433">
    <property type="protein sequence ID" value="AAA92659.1"/>
    <property type="molecule type" value="Genomic_DNA"/>
</dbReference>
<dbReference type="PIR" id="C23106">
    <property type="entry name" value="YQECR9"/>
</dbReference>
<dbReference type="RefSeq" id="WP_001098998.1">
    <property type="nucleotide sequence ID" value="NZ_WWEV01000072.1"/>
</dbReference>
<dbReference type="RefSeq" id="YP_003108302.1">
    <property type="nucleotide sequence ID" value="NC_013122.1"/>
</dbReference>
<dbReference type="SMR" id="P10513"/>
<dbReference type="GO" id="GO:0005576">
    <property type="term" value="C:extracellular region"/>
    <property type="evidence" value="ECO:0007669"/>
    <property type="project" value="UniProtKB-SubCell"/>
</dbReference>
<dbReference type="GO" id="GO:0005886">
    <property type="term" value="C:plasma membrane"/>
    <property type="evidence" value="ECO:0007669"/>
    <property type="project" value="UniProtKB-SubCell"/>
</dbReference>
<dbReference type="InterPro" id="IPR008873">
    <property type="entry name" value="TraA"/>
</dbReference>
<dbReference type="NCBIfam" id="NF010294">
    <property type="entry name" value="PRK13734.1"/>
    <property type="match status" value="1"/>
</dbReference>
<dbReference type="NCBIfam" id="TIGR02758">
    <property type="entry name" value="TraA_TIGR"/>
    <property type="match status" value="1"/>
</dbReference>
<dbReference type="Pfam" id="PF05513">
    <property type="entry name" value="TraA"/>
    <property type="match status" value="1"/>
</dbReference>
<geneLocation type="plasmid">
    <name>IncFII R1-19</name>
    <name>R1 drd-19</name>
</geneLocation>
<organism>
    <name type="scientific">Escherichia coli</name>
    <dbReference type="NCBI Taxonomy" id="562"/>
    <lineage>
        <taxon>Bacteria</taxon>
        <taxon>Pseudomonadati</taxon>
        <taxon>Pseudomonadota</taxon>
        <taxon>Gammaproteobacteria</taxon>
        <taxon>Enterobacterales</taxon>
        <taxon>Enterobacteriaceae</taxon>
        <taxon>Escherichia</taxon>
    </lineage>
</organism>
<gene>
    <name type="primary">traA</name>
</gene>
<accession>P10513</accession>
<keyword id="KW-0007">Acetylation</keyword>
<keyword id="KW-0997">Cell inner membrane</keyword>
<keyword id="KW-1003">Cell membrane</keyword>
<keyword id="KW-0184">Conjugation</keyword>
<keyword id="KW-0472">Membrane</keyword>
<keyword id="KW-0614">Plasmid</keyword>
<keyword id="KW-0964">Secreted</keyword>
<keyword id="KW-0812">Transmembrane</keyword>
<keyword id="KW-1133">Transmembrane helix</keyword>
<proteinExistence type="inferred from homology"/>
<reference key="1">
    <citation type="journal article" date="1985" name="J. Bacteriol.">
        <title>Characterization and sequence analysis of pilin from F-like plasmids.</title>
        <authorList>
            <person name="Frost L.S."/>
            <person name="Finlay B.B."/>
            <person name="Opgenorth A."/>
            <person name="Paranchych W."/>
            <person name="Lee J.S."/>
        </authorList>
    </citation>
    <scope>NUCLEOTIDE SEQUENCE [GENOMIC DNA]</scope>
</reference>
<reference key="2">
    <citation type="journal article" date="1989" name="Nucleic Acids Res.">
        <title>A stable core region of the tra operon mRNA of plasmid R1-19.</title>
        <authorList>
            <person name="Koraimann G.M."/>
            <person name="Hoegenauer G."/>
        </authorList>
    </citation>
    <scope>NUCLEOTIDE SEQUENCE [GENOMIC DNA]</scope>
</reference>
<reference key="3">
    <citation type="journal article" date="1986" name="J. Bacteriol.">
        <title>Nucleotide sequences of the R1-19 plasmid transfer genes traM, finP, traJ, and traY and the traYZ promoter.</title>
        <authorList>
            <person name="Finlay B.B."/>
            <person name="Frost L.S."/>
            <person name="Paranchych W."/>
        </authorList>
    </citation>
    <scope>NUCLEOTIDE SEQUENCE [GENOMIC DNA] OF 1-36</scope>
</reference>
<feature type="propeptide" id="PRO_0000024490" description="Leader peptide; cleaved by LepB" evidence="1">
    <location>
        <begin position="1"/>
        <end position="51"/>
    </location>
</feature>
<feature type="chain" id="PRO_0000024491" description="Pilin">
    <location>
        <begin position="52"/>
        <end position="120"/>
    </location>
</feature>
<feature type="topological domain" description="Periplasmic" evidence="1">
    <location>
        <begin position="1"/>
        <end position="73"/>
    </location>
</feature>
<feature type="transmembrane region" description="Helical" evidence="2">
    <location>
        <begin position="74"/>
        <end position="94"/>
    </location>
</feature>
<feature type="topological domain" description="Cytoplasmic" evidence="1">
    <location>
        <begin position="95"/>
        <end position="98"/>
    </location>
</feature>
<feature type="transmembrane region" description="Helical" evidence="2">
    <location>
        <begin position="99"/>
        <end position="120"/>
    </location>
</feature>
<feature type="modified residue" description="N-acetylalanine" evidence="1">
    <location>
        <position position="52"/>
    </location>
</feature>
<name>PIL4_ECOLX</name>